<protein>
    <recommendedName>
        <fullName evidence="1">tRNA uridine 5-carboxymethylaminomethyl modification enzyme MnmG</fullName>
    </recommendedName>
    <alternativeName>
        <fullName evidence="1">Glucose-inhibited division protein A</fullName>
    </alternativeName>
</protein>
<organism>
    <name type="scientific">Buchnera aphidicola subsp. Acyrthosiphon pisum (strain 5A)</name>
    <dbReference type="NCBI Taxonomy" id="563178"/>
    <lineage>
        <taxon>Bacteria</taxon>
        <taxon>Pseudomonadati</taxon>
        <taxon>Pseudomonadota</taxon>
        <taxon>Gammaproteobacteria</taxon>
        <taxon>Enterobacterales</taxon>
        <taxon>Erwiniaceae</taxon>
        <taxon>Buchnera</taxon>
    </lineage>
</organism>
<gene>
    <name evidence="1" type="primary">mnmG</name>
    <name evidence="1" type="synonym">gidA</name>
    <name type="ordered locus">BUAP5A_001</name>
</gene>
<accession>B8D8G6</accession>
<feature type="chain" id="PRO_1000122742" description="tRNA uridine 5-carboxymethylaminomethyl modification enzyme MnmG">
    <location>
        <begin position="1"/>
        <end position="628"/>
    </location>
</feature>
<feature type="binding site" evidence="1">
    <location>
        <begin position="13"/>
        <end position="18"/>
    </location>
    <ligand>
        <name>FAD</name>
        <dbReference type="ChEBI" id="CHEBI:57692"/>
    </ligand>
</feature>
<feature type="binding site" evidence="1">
    <location>
        <begin position="273"/>
        <end position="287"/>
    </location>
    <ligand>
        <name>NAD(+)</name>
        <dbReference type="ChEBI" id="CHEBI:57540"/>
    </ligand>
</feature>
<sequence>MFNLRNFDVIVVGAGHAGTEAAMASSRMGCKTLLLTQKISDLGALSCNPAIGGIGKSHLVKEIDALGGMMAKAIDYSGIQFRILNSSKGPAVRSTRAQADKILYHETVKKILKKQNNLLILEAEVKDLIFKNYSVVGVLTQNEINFYSRSVVLAAGTFLGGKIHIGLKSYSAGRIGDKSAIDLSVRLRELSLRVNRLKTGTPPRIDINTVNFNNLLIQNSDTPVPVFSFMGNVSHHPKQIPCYLTHTNEKTHEIIRKNLDKSPIYTGFLKGLGPRYCPSIEDKIVRFPDRKSHQVFLEPEGLSSIKVYPNGISTSLPIEVQEQIVASIKGLEKSKIIRPGYAIEYDFFDPKDLNLTLESKLIKGLFFAGQINGTTGYEEAASQGLLAGLNAALSSKNTEGWFPRRDQAYLGVLIDDLTTQGTEEPYRMFTSRAEYRLSLREDNADLRLTEIGRKLGLVNDSRWIRYNQKVLNIQTEMNRLKKNKISPISPDADILKKLYNISLIKEISMSELLKRPQIRYQDLQSLESFRTGIVDLEAIGQIENEIKYAGYIKRQSEEIERHLKNENTFLSSICDYNKIRGLSSEVVKKLNDYKPISIGQASRISGITPAAISILLIHLKKESYKHTL</sequence>
<proteinExistence type="inferred from homology"/>
<name>MNMG_BUCA5</name>
<keyword id="KW-0963">Cytoplasm</keyword>
<keyword id="KW-0274">FAD</keyword>
<keyword id="KW-0285">Flavoprotein</keyword>
<keyword id="KW-0520">NAD</keyword>
<keyword id="KW-0819">tRNA processing</keyword>
<reference key="1">
    <citation type="journal article" date="2009" name="Science">
        <title>The dynamics and time scale of ongoing genomic erosion in symbiotic bacteria.</title>
        <authorList>
            <person name="Moran N.A."/>
            <person name="McLaughlin H.J."/>
            <person name="Sorek R."/>
        </authorList>
    </citation>
    <scope>NUCLEOTIDE SEQUENCE [LARGE SCALE GENOMIC DNA]</scope>
    <source>
        <strain>5A</strain>
    </source>
</reference>
<dbReference type="EMBL" id="CP001161">
    <property type="protein sequence ID" value="ACL30388.1"/>
    <property type="molecule type" value="Genomic_DNA"/>
</dbReference>
<dbReference type="RefSeq" id="WP_009873963.1">
    <property type="nucleotide sequence ID" value="NC_011833.1"/>
</dbReference>
<dbReference type="SMR" id="B8D8G6"/>
<dbReference type="KEGG" id="bap:BUAP5A_001"/>
<dbReference type="HOGENOM" id="CLU_007831_2_2_6"/>
<dbReference type="OrthoDB" id="9815560at2"/>
<dbReference type="Proteomes" id="UP000006904">
    <property type="component" value="Chromosome"/>
</dbReference>
<dbReference type="GO" id="GO:0005829">
    <property type="term" value="C:cytosol"/>
    <property type="evidence" value="ECO:0007669"/>
    <property type="project" value="TreeGrafter"/>
</dbReference>
<dbReference type="GO" id="GO:0050660">
    <property type="term" value="F:flavin adenine dinucleotide binding"/>
    <property type="evidence" value="ECO:0007669"/>
    <property type="project" value="UniProtKB-UniRule"/>
</dbReference>
<dbReference type="GO" id="GO:0030488">
    <property type="term" value="P:tRNA methylation"/>
    <property type="evidence" value="ECO:0007669"/>
    <property type="project" value="TreeGrafter"/>
</dbReference>
<dbReference type="GO" id="GO:0002098">
    <property type="term" value="P:tRNA wobble uridine modification"/>
    <property type="evidence" value="ECO:0007669"/>
    <property type="project" value="InterPro"/>
</dbReference>
<dbReference type="FunFam" id="1.10.10.1800:FF:000001">
    <property type="entry name" value="tRNA uridine 5-carboxymethylaminomethyl modification enzyme MnmG"/>
    <property type="match status" value="1"/>
</dbReference>
<dbReference type="FunFam" id="1.10.150.570:FF:000001">
    <property type="entry name" value="tRNA uridine 5-carboxymethylaminomethyl modification enzyme MnmG"/>
    <property type="match status" value="1"/>
</dbReference>
<dbReference type="FunFam" id="3.50.50.60:FF:000002">
    <property type="entry name" value="tRNA uridine 5-carboxymethylaminomethyl modification enzyme MnmG"/>
    <property type="match status" value="1"/>
</dbReference>
<dbReference type="FunFam" id="3.50.50.60:FF:000010">
    <property type="entry name" value="tRNA uridine 5-carboxymethylaminomethyl modification enzyme MnmG"/>
    <property type="match status" value="1"/>
</dbReference>
<dbReference type="Gene3D" id="3.50.50.60">
    <property type="entry name" value="FAD/NAD(P)-binding domain"/>
    <property type="match status" value="2"/>
</dbReference>
<dbReference type="Gene3D" id="1.10.150.570">
    <property type="entry name" value="GidA associated domain, C-terminal subdomain"/>
    <property type="match status" value="1"/>
</dbReference>
<dbReference type="Gene3D" id="1.10.10.1800">
    <property type="entry name" value="tRNA uridine 5-carboxymethylaminomethyl modification enzyme MnmG/GidA"/>
    <property type="match status" value="1"/>
</dbReference>
<dbReference type="HAMAP" id="MF_00129">
    <property type="entry name" value="MnmG_GidA"/>
    <property type="match status" value="1"/>
</dbReference>
<dbReference type="InterPro" id="IPR036188">
    <property type="entry name" value="FAD/NAD-bd_sf"/>
</dbReference>
<dbReference type="InterPro" id="IPR049312">
    <property type="entry name" value="GIDA_C_N"/>
</dbReference>
<dbReference type="InterPro" id="IPR004416">
    <property type="entry name" value="MnmG"/>
</dbReference>
<dbReference type="InterPro" id="IPR002218">
    <property type="entry name" value="MnmG-rel"/>
</dbReference>
<dbReference type="InterPro" id="IPR020595">
    <property type="entry name" value="MnmG-rel_CS"/>
</dbReference>
<dbReference type="InterPro" id="IPR026904">
    <property type="entry name" value="MnmG_C"/>
</dbReference>
<dbReference type="InterPro" id="IPR047001">
    <property type="entry name" value="MnmG_C_subdom"/>
</dbReference>
<dbReference type="InterPro" id="IPR044920">
    <property type="entry name" value="MnmG_C_subdom_sf"/>
</dbReference>
<dbReference type="InterPro" id="IPR040131">
    <property type="entry name" value="MnmG_N"/>
</dbReference>
<dbReference type="NCBIfam" id="TIGR00136">
    <property type="entry name" value="mnmG_gidA"/>
    <property type="match status" value="1"/>
</dbReference>
<dbReference type="PANTHER" id="PTHR11806">
    <property type="entry name" value="GLUCOSE INHIBITED DIVISION PROTEIN A"/>
    <property type="match status" value="1"/>
</dbReference>
<dbReference type="PANTHER" id="PTHR11806:SF0">
    <property type="entry name" value="PROTEIN MTO1 HOMOLOG, MITOCHONDRIAL"/>
    <property type="match status" value="1"/>
</dbReference>
<dbReference type="Pfam" id="PF01134">
    <property type="entry name" value="GIDA"/>
    <property type="match status" value="1"/>
</dbReference>
<dbReference type="Pfam" id="PF21680">
    <property type="entry name" value="GIDA_C_1st"/>
    <property type="match status" value="1"/>
</dbReference>
<dbReference type="Pfam" id="PF13932">
    <property type="entry name" value="SAM_GIDA_C"/>
    <property type="match status" value="1"/>
</dbReference>
<dbReference type="SMART" id="SM01228">
    <property type="entry name" value="GIDA_assoc_3"/>
    <property type="match status" value="1"/>
</dbReference>
<dbReference type="SUPFAM" id="SSF51905">
    <property type="entry name" value="FAD/NAD(P)-binding domain"/>
    <property type="match status" value="1"/>
</dbReference>
<dbReference type="PROSITE" id="PS01280">
    <property type="entry name" value="GIDA_1"/>
    <property type="match status" value="1"/>
</dbReference>
<dbReference type="PROSITE" id="PS01281">
    <property type="entry name" value="GIDA_2"/>
    <property type="match status" value="1"/>
</dbReference>
<comment type="function">
    <text evidence="1">NAD-binding protein involved in the addition of a carboxymethylaminomethyl (cmnm) group at the wobble position (U34) of certain tRNAs, forming tRNA-cmnm(5)s(2)U34.</text>
</comment>
<comment type="cofactor">
    <cofactor evidence="1">
        <name>FAD</name>
        <dbReference type="ChEBI" id="CHEBI:57692"/>
    </cofactor>
</comment>
<comment type="subunit">
    <text evidence="1">Homodimer. Heterotetramer of two MnmE and two MnmG subunits.</text>
</comment>
<comment type="subcellular location">
    <subcellularLocation>
        <location evidence="1">Cytoplasm</location>
    </subcellularLocation>
</comment>
<comment type="similarity">
    <text evidence="1">Belongs to the MnmG family.</text>
</comment>
<evidence type="ECO:0000255" key="1">
    <source>
        <dbReference type="HAMAP-Rule" id="MF_00129"/>
    </source>
</evidence>